<protein>
    <recommendedName>
        <fullName>DNA damage-binding protein 1</fullName>
    </recommendedName>
    <alternativeName>
        <fullName>Damage-specific DNA-binding protein 1</fullName>
    </alternativeName>
</protein>
<reference key="1">
    <citation type="submission" date="2000-08" db="EMBL/GenBank/DDBJ databases">
        <authorList>
            <person name="Chao C.C."/>
        </authorList>
    </citation>
    <scope>NUCLEOTIDE SEQUENCE [MRNA]</scope>
    <source>
        <strain>Sprague-Dawley</strain>
        <tissue>Brain</tissue>
    </source>
</reference>
<reference key="2">
    <citation type="journal article" date="2012" name="Nat. Commun.">
        <title>Quantitative maps of protein phosphorylation sites across 14 different rat organs and tissues.</title>
        <authorList>
            <person name="Lundby A."/>
            <person name="Secher A."/>
            <person name="Lage K."/>
            <person name="Nordsborg N.B."/>
            <person name="Dmytriyev A."/>
            <person name="Lundby C."/>
            <person name="Olsen J.V."/>
        </authorList>
    </citation>
    <scope>PHOSPHORYLATION [LARGE SCALE ANALYSIS] AT THR-1125</scope>
    <scope>IDENTIFICATION BY MASS SPECTROMETRY [LARGE SCALE ANALYSIS]</scope>
</reference>
<organism>
    <name type="scientific">Rattus norvegicus</name>
    <name type="common">Rat</name>
    <dbReference type="NCBI Taxonomy" id="10116"/>
    <lineage>
        <taxon>Eukaryota</taxon>
        <taxon>Metazoa</taxon>
        <taxon>Chordata</taxon>
        <taxon>Craniata</taxon>
        <taxon>Vertebrata</taxon>
        <taxon>Euteleostomi</taxon>
        <taxon>Mammalia</taxon>
        <taxon>Eutheria</taxon>
        <taxon>Euarchontoglires</taxon>
        <taxon>Glires</taxon>
        <taxon>Rodentia</taxon>
        <taxon>Myomorpha</taxon>
        <taxon>Muroidea</taxon>
        <taxon>Muridae</taxon>
        <taxon>Murinae</taxon>
        <taxon>Rattus</taxon>
    </lineage>
</organism>
<keyword id="KW-0007">Acetylation</keyword>
<keyword id="KW-0090">Biological rhythms</keyword>
<keyword id="KW-0963">Cytoplasm</keyword>
<keyword id="KW-0227">DNA damage</keyword>
<keyword id="KW-0234">DNA repair</keyword>
<keyword id="KW-0238">DNA-binding</keyword>
<keyword id="KW-1017">Isopeptide bond</keyword>
<keyword id="KW-0539">Nucleus</keyword>
<keyword id="KW-0597">Phosphoprotein</keyword>
<keyword id="KW-1185">Reference proteome</keyword>
<keyword id="KW-0677">Repeat</keyword>
<keyword id="KW-0832">Ubl conjugation</keyword>
<keyword id="KW-0833">Ubl conjugation pathway</keyword>
<proteinExistence type="evidence at protein level"/>
<comment type="function">
    <text evidence="2 3">Protein, which is both involved in DNA repair and protein ubiquitination, as part of the UV-DDB complex and DCX (DDB1-CUL4-X-box) complexes, respectively. Core component of the UV-DDB complex (UV-damaged DNA-binding protein complex), a complex that recognizes UV-induced DNA damage and recruit proteins of the nucleotide excision repair pathway (the NER pathway) to initiate DNA repair. The UV-DDB complex preferentially binds to cyclobutane pyrimidine dimers (CPD), 6-4 photoproducts (6-4 PP), apurinic sites and short mismatches. Also functions as a component of numerous distinct DCX (DDB1-CUL4-X-box) E3 ubiquitin-protein ligase complexes which mediate the ubiquitination and subsequent proteasomal degradation of target proteins. The functional specificity of the DCX E3 ubiquitin-protein ligase complex is determined by the variable substrate recognition component recruited by DDB1. DCX(DDB2) (also known as DDB1-CUL4-ROC1, CUL4-DDB-ROC1 and CUL4-DDB-RBX1) may ubiquitinate histone H2A, histone H3 and histone H4 at sites of UV-induced DNA damage. The ubiquitination of histones may facilitate their removal from the nucleosome and promote subsequent DNA repair. DCX(DDB2) also ubiquitinates XPC, which may enhance DNA-binding by XPC and promote NER. DCX(DTL) plays a role in PCNA-dependent polyubiquitination of CDT1 and MDM2-dependent ubiquitination of TP53 in response to radiation-induced DNA damage and during DNA replication. DCX(ERCC8) (the CSA complex) plays a role in transcription-coupled repair (TCR). The DDB1-CUL4A-DTL E3 ligase complex regulates the circadian clock function by mediating the ubiquitination and degradation of CRY1 (By similarity). DDB1-mediated CRY1 degradation promotes FOXO1 protein stability and FOXO1-mediated gluconeogenesis in the liver (By similarity). By acting on TET dioxygenses, essential for oocyte maintenance at the primordial follicle stage, hence essential for female fertility (By similarity). Maternal factor required for proper zygotic genome activation and genome reprogramming (By similarity).</text>
</comment>
<comment type="pathway">
    <text evidence="2">Protein modification; protein ubiquitination.</text>
</comment>
<comment type="subunit">
    <text evidence="2 3">Component of the UV-DDB complex which includes DDB1 and DDB2; the heterodimer dimerizes to give rise to a heterotetramer when bound to damaged DNA. The UV-DDB complex interacts with monoubiquitinated histone H2A and binds to XPC via the DDB2 subunit. Component of numerous DCX (DDB1-CUL4-X-box) E3 ubiquitin-protein ligase complexes which consist of a core of DDB1, CUL4A or CUL4B and RBX1. DDB1 may recruit specific substrate targeting subunits to the DCX complex. These substrate targeting subunits are generally known as DCAF (DDB1- and CUL4-associated factor) or CDW (CUL4-DDB1-associated WD40-repeat) proteins. Interacts with AMBRA1, ATG16L1, BTRC, CRBN, DCAF1, DCAF4, DCAF5, DCAF6, DCAF7, DCAF8, DCAF9, DCAF10, DCAF11, DCAF12, DCAF15, DCAF16, DCAF17, DDA1, DET1, DTL, ERCC8, FBXW5, FBXW8, GRWD1, KATNB1, NLE1, NUP43, PAFAH1B1, PHIP, PWP1, RBBP4, RBBP5, RBBP7, COP1, SNRNP40, DCAF1, WDR5, WDR5B, WDR12, WDR26, WDR39, WDR42, WDR53, WDR59, WDR61, WSB1, WSB2, LRWD1 and WDTC1. DCX complexes may associate with the COP9 signalosome, and this inhibits the E3 ubiquitin-protein ligase activity of the complex. Interacts with NF2, TSC1 and TSC2. Interacts with AGO1 and AGO2. Associates with the E3 ligase complex containing DYRK2, EDD/UBR5, DDB1 and DCAF1 proteins (EDVP complex). Interacts directly with DYRK2. DCX(DTL) complex interacts with FBXO11; does not ubiquitinate and degradate FBXO11. Interacts with TRPC4AP (By similarity). Interacts with CRY1 and CRY2 (By similarity). The DDB1-CUL4A complex interacts with CRY1 (By similarity). May also interact with DCUN1D1, DCUN1D2, DCUN1D3 and DCUN1D5 (By similarity). Component of the DCX(DCAF13) E3 ubiquitin ligase complex, at least composed of CUL4 (CUL4A or CUL4B), DDB1, DCAF13 and RBX1. Interacts with DCAF13 (via WD40 domain) (By similarity).</text>
</comment>
<comment type="subcellular location">
    <subcellularLocation>
        <location evidence="2">Cytoplasm</location>
    </subcellularLocation>
    <subcellularLocation>
        <location evidence="2">Nucleus</location>
    </subcellularLocation>
    <text evidence="2 3">Primarily cytoplasmic. Translocates to the nucleus following UV irradiation and subsequently accumulates at sites of DNA damage. More concentrated in nuclei than in cytoplasm in germinal vesicle (GV) stage oocytes, zygotes and the 2-cell stage, but distributed in the cytoplasm at the MII-stage oocytes (By similarity).</text>
</comment>
<comment type="domain">
    <text evidence="2">The core of the protein consists of three WD40 beta-propeller domains.</text>
</comment>
<comment type="PTM">
    <text evidence="3">Phosphorylated by ABL1.</text>
</comment>
<comment type="PTM">
    <text evidence="2">Ubiquitinated by CUL4A. Subsequently degraded by ubiquitin-dependent proteolysis.</text>
</comment>
<comment type="PTM">
    <text evidence="2">Acetylated, promoting interaction with CUL4 (CUL4A or CUL4B) and subsequent formation of DCX (DDB1-CUL4-X-box) E3 ubiquitin-protein ligase complexes. Deacetylation by SIRT7 impairs the interaction with CUL4 (CUL4A or CUL4B) and formation of DCX (DDB1-CUL4-X-box) E3 ubiquitin-protein ligase complexes.</text>
</comment>
<comment type="similarity">
    <text evidence="4">Belongs to the DDB1 family.</text>
</comment>
<dbReference type="EMBL" id="AJ277077">
    <property type="protein sequence ID" value="CAB89874.2"/>
    <property type="molecule type" value="mRNA"/>
</dbReference>
<dbReference type="SMR" id="Q9ESW0"/>
<dbReference type="FunCoup" id="Q9ESW0">
    <property type="interactions" value="4066"/>
</dbReference>
<dbReference type="IntAct" id="Q9ESW0">
    <property type="interactions" value="2"/>
</dbReference>
<dbReference type="MINT" id="Q9ESW0"/>
<dbReference type="STRING" id="10116.ENSRNOP00000028188"/>
<dbReference type="iPTMnet" id="Q9ESW0"/>
<dbReference type="PhosphoSitePlus" id="Q9ESW0"/>
<dbReference type="jPOST" id="Q9ESW0"/>
<dbReference type="PaxDb" id="10116-ENSRNOP00000028188"/>
<dbReference type="UCSC" id="RGD:621889">
    <property type="organism name" value="rat"/>
</dbReference>
<dbReference type="AGR" id="RGD:621889"/>
<dbReference type="RGD" id="621889">
    <property type="gene designation" value="Ddb1"/>
</dbReference>
<dbReference type="eggNOG" id="KOG1897">
    <property type="taxonomic scope" value="Eukaryota"/>
</dbReference>
<dbReference type="InParanoid" id="Q9ESW0"/>
<dbReference type="PhylomeDB" id="Q9ESW0"/>
<dbReference type="Reactome" id="R-RNO-110314">
    <property type="pathway name" value="Recognition of DNA damage by PCNA-containing replication complex"/>
</dbReference>
<dbReference type="Reactome" id="R-RNO-5696394">
    <property type="pathway name" value="DNA Damage Recognition in GG-NER"/>
</dbReference>
<dbReference type="Reactome" id="R-RNO-5696395">
    <property type="pathway name" value="Formation of Incision Complex in GG-NER"/>
</dbReference>
<dbReference type="Reactome" id="R-RNO-5696400">
    <property type="pathway name" value="Dual Incision in GG-NER"/>
</dbReference>
<dbReference type="Reactome" id="R-RNO-6781823">
    <property type="pathway name" value="Formation of TC-NER Pre-Incision Complex"/>
</dbReference>
<dbReference type="Reactome" id="R-RNO-6782135">
    <property type="pathway name" value="Dual incision in TC-NER"/>
</dbReference>
<dbReference type="Reactome" id="R-RNO-6782210">
    <property type="pathway name" value="Gap-filling DNA repair synthesis and ligation in TC-NER"/>
</dbReference>
<dbReference type="Reactome" id="R-RNO-8951664">
    <property type="pathway name" value="Neddylation"/>
</dbReference>
<dbReference type="UniPathway" id="UPA00143"/>
<dbReference type="PRO" id="PR:Q9ESW0"/>
<dbReference type="Proteomes" id="UP000002494">
    <property type="component" value="Unplaced"/>
</dbReference>
<dbReference type="GO" id="GO:0080008">
    <property type="term" value="C:Cul4-RING E3 ubiquitin ligase complex"/>
    <property type="evidence" value="ECO:0000250"/>
    <property type="project" value="UniProtKB"/>
</dbReference>
<dbReference type="GO" id="GO:0031464">
    <property type="term" value="C:Cul4A-RING E3 ubiquitin ligase complex"/>
    <property type="evidence" value="ECO:0000250"/>
    <property type="project" value="UniProtKB"/>
</dbReference>
<dbReference type="GO" id="GO:0031465">
    <property type="term" value="C:Cul4B-RING E3 ubiquitin ligase complex"/>
    <property type="evidence" value="ECO:0000250"/>
    <property type="project" value="UniProtKB"/>
</dbReference>
<dbReference type="GO" id="GO:0005737">
    <property type="term" value="C:cytoplasm"/>
    <property type="evidence" value="ECO:0000250"/>
    <property type="project" value="UniProtKB"/>
</dbReference>
<dbReference type="GO" id="GO:0005730">
    <property type="term" value="C:nucleolus"/>
    <property type="evidence" value="ECO:0000266"/>
    <property type="project" value="RGD"/>
</dbReference>
<dbReference type="GO" id="GO:0005634">
    <property type="term" value="C:nucleus"/>
    <property type="evidence" value="ECO:0000250"/>
    <property type="project" value="UniProtKB"/>
</dbReference>
<dbReference type="GO" id="GO:0032991">
    <property type="term" value="C:protein-containing complex"/>
    <property type="evidence" value="ECO:0000266"/>
    <property type="project" value="RGD"/>
</dbReference>
<dbReference type="GO" id="GO:0035861">
    <property type="term" value="C:site of double-strand break"/>
    <property type="evidence" value="ECO:0000318"/>
    <property type="project" value="GO_Central"/>
</dbReference>
<dbReference type="GO" id="GO:0097602">
    <property type="term" value="F:cullin family protein binding"/>
    <property type="evidence" value="ECO:0000266"/>
    <property type="project" value="RGD"/>
</dbReference>
<dbReference type="GO" id="GO:0003684">
    <property type="term" value="F:damaged DNA binding"/>
    <property type="evidence" value="ECO:0000315"/>
    <property type="project" value="RGD"/>
</dbReference>
<dbReference type="GO" id="GO:0044877">
    <property type="term" value="F:protein-containing complex binding"/>
    <property type="evidence" value="ECO:0000266"/>
    <property type="project" value="RGD"/>
</dbReference>
<dbReference type="GO" id="GO:0030674">
    <property type="term" value="F:protein-macromolecule adaptor activity"/>
    <property type="evidence" value="ECO:0000266"/>
    <property type="project" value="RGD"/>
</dbReference>
<dbReference type="GO" id="GO:0160072">
    <property type="term" value="F:ubiquitin ligase complex scaffold activity"/>
    <property type="evidence" value="ECO:0000266"/>
    <property type="project" value="RGD"/>
</dbReference>
<dbReference type="GO" id="GO:0071987">
    <property type="term" value="F:WD40-repeat domain binding"/>
    <property type="evidence" value="ECO:0000266"/>
    <property type="project" value="RGD"/>
</dbReference>
<dbReference type="GO" id="GO:0006915">
    <property type="term" value="P:apoptotic process"/>
    <property type="evidence" value="ECO:0000266"/>
    <property type="project" value="RGD"/>
</dbReference>
<dbReference type="GO" id="GO:0051702">
    <property type="term" value="P:biological process involved in interaction with symbiont"/>
    <property type="evidence" value="ECO:0000266"/>
    <property type="project" value="RGD"/>
</dbReference>
<dbReference type="GO" id="GO:0034644">
    <property type="term" value="P:cellular response to UV"/>
    <property type="evidence" value="ECO:0000266"/>
    <property type="project" value="RGD"/>
</dbReference>
<dbReference type="GO" id="GO:0006974">
    <property type="term" value="P:DNA damage response"/>
    <property type="evidence" value="ECO:0000266"/>
    <property type="project" value="RGD"/>
</dbReference>
<dbReference type="GO" id="GO:0006281">
    <property type="term" value="P:DNA repair"/>
    <property type="evidence" value="ECO:0000318"/>
    <property type="project" value="GO_Central"/>
</dbReference>
<dbReference type="GO" id="GO:0035234">
    <property type="term" value="P:ectopic germ cell programmed cell death"/>
    <property type="evidence" value="ECO:0000266"/>
    <property type="project" value="RGD"/>
</dbReference>
<dbReference type="GO" id="GO:0044725">
    <property type="term" value="P:epigenetic programming in the zygotic pronuclei"/>
    <property type="evidence" value="ECO:0000266"/>
    <property type="project" value="RGD"/>
</dbReference>
<dbReference type="GO" id="GO:0043066">
    <property type="term" value="P:negative regulation of apoptotic process"/>
    <property type="evidence" value="ECO:0000266"/>
    <property type="project" value="RGD"/>
</dbReference>
<dbReference type="GO" id="GO:0051093">
    <property type="term" value="P:negative regulation of developmental process"/>
    <property type="evidence" value="ECO:0000266"/>
    <property type="project" value="RGD"/>
</dbReference>
<dbReference type="GO" id="GO:2000242">
    <property type="term" value="P:negative regulation of reproductive process"/>
    <property type="evidence" value="ECO:0000266"/>
    <property type="project" value="RGD"/>
</dbReference>
<dbReference type="GO" id="GO:0046726">
    <property type="term" value="P:positive regulation by virus of viral protein levels in host cell"/>
    <property type="evidence" value="ECO:0000266"/>
    <property type="project" value="RGD"/>
</dbReference>
<dbReference type="GO" id="GO:0045722">
    <property type="term" value="P:positive regulation of gluconeogenesis"/>
    <property type="evidence" value="ECO:0000250"/>
    <property type="project" value="UniProtKB"/>
</dbReference>
<dbReference type="GO" id="GO:0045732">
    <property type="term" value="P:positive regulation of protein catabolic process"/>
    <property type="evidence" value="ECO:0000266"/>
    <property type="project" value="RGD"/>
</dbReference>
<dbReference type="GO" id="GO:0045070">
    <property type="term" value="P:positive regulation of viral genome replication"/>
    <property type="evidence" value="ECO:0000266"/>
    <property type="project" value="RGD"/>
</dbReference>
<dbReference type="GO" id="GO:0010498">
    <property type="term" value="P:proteasomal protein catabolic process"/>
    <property type="evidence" value="ECO:0000266"/>
    <property type="project" value="RGD"/>
</dbReference>
<dbReference type="GO" id="GO:0043161">
    <property type="term" value="P:proteasome-mediated ubiquitin-dependent protein catabolic process"/>
    <property type="evidence" value="ECO:0000250"/>
    <property type="project" value="UniProtKB"/>
</dbReference>
<dbReference type="GO" id="GO:0016567">
    <property type="term" value="P:protein ubiquitination"/>
    <property type="evidence" value="ECO:0000250"/>
    <property type="project" value="UniProtKB"/>
</dbReference>
<dbReference type="GO" id="GO:0042752">
    <property type="term" value="P:regulation of circadian rhythm"/>
    <property type="evidence" value="ECO:0000250"/>
    <property type="project" value="UniProtKB"/>
</dbReference>
<dbReference type="GO" id="GO:1901990">
    <property type="term" value="P:regulation of mitotic cell cycle phase transition"/>
    <property type="evidence" value="ECO:0000266"/>
    <property type="project" value="RGD"/>
</dbReference>
<dbReference type="GO" id="GO:0048511">
    <property type="term" value="P:rhythmic process"/>
    <property type="evidence" value="ECO:0007669"/>
    <property type="project" value="UniProtKB-KW"/>
</dbReference>
<dbReference type="GO" id="GO:0007056">
    <property type="term" value="P:spindle assembly involved in female meiosis"/>
    <property type="evidence" value="ECO:0000266"/>
    <property type="project" value="RGD"/>
</dbReference>
<dbReference type="GO" id="GO:0006511">
    <property type="term" value="P:ubiquitin-dependent protein catabolic process"/>
    <property type="evidence" value="ECO:0000250"/>
    <property type="project" value="UniProtKB"/>
</dbReference>
<dbReference type="GO" id="GO:0070914">
    <property type="term" value="P:UV-damage excision repair"/>
    <property type="evidence" value="ECO:0000266"/>
    <property type="project" value="RGD"/>
</dbReference>
<dbReference type="GO" id="GO:0019076">
    <property type="term" value="P:viral release from host cell"/>
    <property type="evidence" value="ECO:0000266"/>
    <property type="project" value="RGD"/>
</dbReference>
<dbReference type="GO" id="GO:0016055">
    <property type="term" value="P:Wnt signaling pathway"/>
    <property type="evidence" value="ECO:0000266"/>
    <property type="project" value="RGD"/>
</dbReference>
<dbReference type="FunFam" id="1.10.150.910:FF:000001">
    <property type="entry name" value="DNA damage-binding protein 1"/>
    <property type="match status" value="1"/>
</dbReference>
<dbReference type="FunFam" id="2.130.10.10:FF:000070">
    <property type="entry name" value="DNA damage-binding protein 1"/>
    <property type="match status" value="1"/>
</dbReference>
<dbReference type="FunFam" id="2.130.10.10:FF:002576">
    <property type="entry name" value="DNA damage-binding protein 1"/>
    <property type="match status" value="1"/>
</dbReference>
<dbReference type="Gene3D" id="1.10.150.910">
    <property type="match status" value="1"/>
</dbReference>
<dbReference type="Gene3D" id="2.130.10.10">
    <property type="entry name" value="YVTN repeat-like/Quinoprotein amine dehydrogenase"/>
    <property type="match status" value="3"/>
</dbReference>
<dbReference type="InterPro" id="IPR018846">
    <property type="entry name" value="Beta-prop_RSE1/DDB1/CPSF1_1st"/>
</dbReference>
<dbReference type="InterPro" id="IPR004871">
    <property type="entry name" value="Cleavage/polyA-sp_fac_asu_C"/>
</dbReference>
<dbReference type="InterPro" id="IPR050358">
    <property type="entry name" value="RSE1/DDB1/CFT1/CPSF1"/>
</dbReference>
<dbReference type="InterPro" id="IPR015943">
    <property type="entry name" value="WD40/YVTN_repeat-like_dom_sf"/>
</dbReference>
<dbReference type="InterPro" id="IPR036322">
    <property type="entry name" value="WD40_repeat_dom_sf"/>
</dbReference>
<dbReference type="PANTHER" id="PTHR10644">
    <property type="entry name" value="DNA REPAIR/RNA PROCESSING CPSF FAMILY"/>
    <property type="match status" value="1"/>
</dbReference>
<dbReference type="Pfam" id="PF10433">
    <property type="entry name" value="Beta-prop_RSE1_1st"/>
    <property type="match status" value="1"/>
</dbReference>
<dbReference type="Pfam" id="PF23726">
    <property type="entry name" value="Beta-prop_RSE1_2nd"/>
    <property type="match status" value="1"/>
</dbReference>
<dbReference type="Pfam" id="PF03178">
    <property type="entry name" value="CPSF_A"/>
    <property type="match status" value="1"/>
</dbReference>
<dbReference type="SUPFAM" id="SSF50978">
    <property type="entry name" value="WD40 repeat-like"/>
    <property type="match status" value="1"/>
</dbReference>
<evidence type="ECO:0000250" key="1"/>
<evidence type="ECO:0000250" key="2">
    <source>
        <dbReference type="UniProtKB" id="Q16531"/>
    </source>
</evidence>
<evidence type="ECO:0000250" key="3">
    <source>
        <dbReference type="UniProtKB" id="Q3U1J4"/>
    </source>
</evidence>
<evidence type="ECO:0000305" key="4"/>
<evidence type="ECO:0007744" key="5">
    <source>
    </source>
</evidence>
<accession>Q9ESW0</accession>
<gene>
    <name type="primary">Ddb1</name>
</gene>
<feature type="initiator methionine" description="Removed" evidence="2">
    <location>
        <position position="1"/>
    </location>
</feature>
<feature type="chain" id="PRO_0000281038" description="DNA damage-binding protein 1">
    <location>
        <begin position="2"/>
        <end position="1140"/>
    </location>
</feature>
<feature type="region of interest" description="Interaction with CDT1" evidence="1">
    <location>
        <begin position="2"/>
        <end position="768"/>
    </location>
</feature>
<feature type="region of interest" description="WD repeat beta-propeller A" evidence="1">
    <location>
        <begin position="13"/>
        <end position="356"/>
    </location>
</feature>
<feature type="region of interest" description="WD repeat beta-propeller B; Interaction with CUL4A" evidence="1">
    <location>
        <begin position="391"/>
        <end position="708"/>
    </location>
</feature>
<feature type="region of interest" description="WD repeat beta-propeller C" evidence="1">
    <location>
        <begin position="709"/>
        <end position="1043"/>
    </location>
</feature>
<feature type="region of interest" description="Interaction with CDT1 and CUL4A" evidence="1">
    <location>
        <begin position="771"/>
        <end position="1140"/>
    </location>
</feature>
<feature type="modified residue" description="N-acetylserine" evidence="2">
    <location>
        <position position="2"/>
    </location>
</feature>
<feature type="modified residue" description="N6-acetyllysine" evidence="2">
    <location>
        <position position="1067"/>
    </location>
</feature>
<feature type="modified residue" description="Phosphothreonine" evidence="5">
    <location>
        <position position="1125"/>
    </location>
</feature>
<feature type="cross-link" description="Glycyl lysine isopeptide (Lys-Gly) (interchain with G-Cter in SUMO2)" evidence="2">
    <location>
        <position position="1121"/>
    </location>
</feature>
<name>DDB1_RAT</name>
<sequence length="1140" mass="126862">MSYNYVVTAQKPTAVNGCVTGHFTSAEDINLLIAKNTRLEIYVVTAEGLRPVKEVGMYGKIAVMELFRPKGESKDLLFILTAKYNACILEYKQSGESIDIITRAHGNVQDRIGRPSETGIIGIIDPECRMIGLRLYDGLFKVIPLDRDNKELKAFNIRLEELHVIDVKFLYGCQAPTICFVYQDPQGRHVKTYEVSLREKEFNKGPWKQENVEAEASMVIAVPEPFGGAIIIGQESITYHNGDKYLAIAPPIIKQSTIVCHNRVDPNGSRYLLGDMEGRLFMLLLEKEEQMDGTVTLKDLRVELLGETSIAECLTYLDNGVVFVGSRLGDSQPVKLNVDSNEQGSYVVAMETFTNLGPIVDMCVVDLERQGQGQLVTCSGAFKEGSLRIIRNGIGIHEHASIDLPGIKGLWPLRSDPNRETDDTLVLSFVGQTRVLMLNGEEVEETELMGFVDDQQTFFCGNVAHQQLIQITSASVRLVSQEPKALVSEWKEPRAKNISVASCNSSQVVVAVGRALYYLQIHPQELRQISHTEMEHEVACLDVTPLGDSNGLSPLCAIGLWTDISARILKLPSFELLHKEMLGGEIIPRSILMTTFESSHYLLCALGDGALFYFGLNIETGLLSDRKKVTLGTQPTVLRTFRSLSTTNVFACSDRPTVIYSSNHKLVFSNVNLKEVNYMCPLNSDGYPDSLALANTSTLTIGTMNEIQKLHIRTVPIYESPRKICYQEVSQCFGVLSTRIEVQDTSGGTTALRPSASTQALSSSVSSSKLFSSSAAPHETSFGEEVEVHNLLIIDQHTFEVLHAHQFLQNEYALSLVSCKLGKDPNTYFIVGTAMVYPEEAEPKQGRIVVFQYSGGKLQTVAEKEVKGAVYSMVEFNGKLLASINSTVRLYEWTTEKELRTECNHYNNIMALYLKTKGDFILVGDLMRSVLLLAYKPMEGNFEEIARDFNPNWMSAVEILDDDNFLGAENAFNLFVCQKDSAATTDEERQHLQEVGLFHLGEFVNVFCHGSLVMQNLGETSTPTQGSVLLGTVNGMIGLVTSLSESWYNLLLDMQNRLNKVIKSVGKIEHSFWRSFHTERKTEPATGFIDGDLIESFLDISRPKMQEVVANLQYDDGSGMKREATADDLIKVVEELTRIH</sequence>